<evidence type="ECO:0000255" key="1">
    <source>
        <dbReference type="HAMAP-Rule" id="MF_00178"/>
    </source>
</evidence>
<comment type="function">
    <text evidence="1">Catalyzes the formation of 6,7-dimethyl-8-ribityllumazine by condensation of 5-amino-6-(D-ribitylamino)uracil with 3,4-dihydroxy-2-butanone 4-phosphate. This is the penultimate step in the biosynthesis of riboflavin.</text>
</comment>
<comment type="catalytic activity">
    <reaction evidence="1">
        <text>(2S)-2-hydroxy-3-oxobutyl phosphate + 5-amino-6-(D-ribitylamino)uracil = 6,7-dimethyl-8-(1-D-ribityl)lumazine + phosphate + 2 H2O + H(+)</text>
        <dbReference type="Rhea" id="RHEA:26152"/>
        <dbReference type="ChEBI" id="CHEBI:15377"/>
        <dbReference type="ChEBI" id="CHEBI:15378"/>
        <dbReference type="ChEBI" id="CHEBI:15934"/>
        <dbReference type="ChEBI" id="CHEBI:43474"/>
        <dbReference type="ChEBI" id="CHEBI:58201"/>
        <dbReference type="ChEBI" id="CHEBI:58830"/>
        <dbReference type="EC" id="2.5.1.78"/>
    </reaction>
</comment>
<comment type="pathway">
    <text evidence="1">Cofactor biosynthesis; riboflavin biosynthesis; riboflavin from 2-hydroxy-3-oxobutyl phosphate and 5-amino-6-(D-ribitylamino)uracil: step 1/2.</text>
</comment>
<comment type="similarity">
    <text evidence="1">Belongs to the DMRL synthase family.</text>
</comment>
<organism>
    <name type="scientific">Prochlorococcus marinus (strain MIT 9303)</name>
    <dbReference type="NCBI Taxonomy" id="59922"/>
    <lineage>
        <taxon>Bacteria</taxon>
        <taxon>Bacillati</taxon>
        <taxon>Cyanobacteriota</taxon>
        <taxon>Cyanophyceae</taxon>
        <taxon>Synechococcales</taxon>
        <taxon>Prochlorococcaceae</taxon>
        <taxon>Prochlorococcus</taxon>
    </lineage>
</organism>
<sequence length="165" mass="17408">MMATYEGRYTDAQALRIAVVVARFNDLVTGKLLSGCLDCLARHGVDTSSNSDQLDVAWVPGAFELPIVTQTLALSGQYEVVITLGAVIRGDTPHFDVVVAEASKGIASVSRETGVPVIFGVLTTDTMQQALERAGIKSNLGWSYGLQALEMGSLMGVLRSATSAS</sequence>
<proteinExistence type="inferred from homology"/>
<gene>
    <name evidence="1" type="primary">ribH</name>
    <name type="ordered locus">P9303_00901</name>
</gene>
<protein>
    <recommendedName>
        <fullName evidence="1">6,7-dimethyl-8-ribityllumazine synthase</fullName>
        <shortName evidence="1">DMRL synthase</shortName>
        <shortName evidence="1">LS</shortName>
        <shortName evidence="1">Lumazine synthase</shortName>
        <ecNumber evidence="1">2.5.1.78</ecNumber>
    </recommendedName>
</protein>
<reference key="1">
    <citation type="journal article" date="2007" name="PLoS Genet.">
        <title>Patterns and implications of gene gain and loss in the evolution of Prochlorococcus.</title>
        <authorList>
            <person name="Kettler G.C."/>
            <person name="Martiny A.C."/>
            <person name="Huang K."/>
            <person name="Zucker J."/>
            <person name="Coleman M.L."/>
            <person name="Rodrigue S."/>
            <person name="Chen F."/>
            <person name="Lapidus A."/>
            <person name="Ferriera S."/>
            <person name="Johnson J."/>
            <person name="Steglich C."/>
            <person name="Church G.M."/>
            <person name="Richardson P."/>
            <person name="Chisholm S.W."/>
        </authorList>
    </citation>
    <scope>NUCLEOTIDE SEQUENCE [LARGE SCALE GENOMIC DNA]</scope>
    <source>
        <strain>MIT 9303</strain>
    </source>
</reference>
<feature type="chain" id="PRO_1000040480" description="6,7-dimethyl-8-ribityllumazine synthase">
    <location>
        <begin position="1"/>
        <end position="165"/>
    </location>
</feature>
<feature type="active site" description="Proton donor" evidence="1">
    <location>
        <position position="94"/>
    </location>
</feature>
<feature type="binding site" evidence="1">
    <location>
        <position position="24"/>
    </location>
    <ligand>
        <name>5-amino-6-(D-ribitylamino)uracil</name>
        <dbReference type="ChEBI" id="CHEBI:15934"/>
    </ligand>
</feature>
<feature type="binding site" evidence="1">
    <location>
        <begin position="62"/>
        <end position="64"/>
    </location>
    <ligand>
        <name>5-amino-6-(D-ribitylamino)uracil</name>
        <dbReference type="ChEBI" id="CHEBI:15934"/>
    </ligand>
</feature>
<feature type="binding site" evidence="1">
    <location>
        <begin position="86"/>
        <end position="88"/>
    </location>
    <ligand>
        <name>5-amino-6-(D-ribitylamino)uracil</name>
        <dbReference type="ChEBI" id="CHEBI:15934"/>
    </ligand>
</feature>
<feature type="binding site" evidence="1">
    <location>
        <begin position="91"/>
        <end position="92"/>
    </location>
    <ligand>
        <name>(2S)-2-hydroxy-3-oxobutyl phosphate</name>
        <dbReference type="ChEBI" id="CHEBI:58830"/>
    </ligand>
</feature>
<feature type="binding site" evidence="1">
    <location>
        <position position="119"/>
    </location>
    <ligand>
        <name>5-amino-6-(D-ribitylamino)uracil</name>
        <dbReference type="ChEBI" id="CHEBI:15934"/>
    </ligand>
</feature>
<feature type="binding site" evidence="1">
    <location>
        <position position="133"/>
    </location>
    <ligand>
        <name>(2S)-2-hydroxy-3-oxobutyl phosphate</name>
        <dbReference type="ChEBI" id="CHEBI:58830"/>
    </ligand>
</feature>
<name>RISB_PROM3</name>
<dbReference type="EC" id="2.5.1.78" evidence="1"/>
<dbReference type="EMBL" id="CP000554">
    <property type="protein sequence ID" value="ABM76847.1"/>
    <property type="molecule type" value="Genomic_DNA"/>
</dbReference>
<dbReference type="SMR" id="A2C5T7"/>
<dbReference type="STRING" id="59922.P9303_00901"/>
<dbReference type="KEGG" id="pmf:P9303_00901"/>
<dbReference type="HOGENOM" id="CLU_089358_1_0_3"/>
<dbReference type="UniPathway" id="UPA00275">
    <property type="reaction ID" value="UER00404"/>
</dbReference>
<dbReference type="Proteomes" id="UP000002274">
    <property type="component" value="Chromosome"/>
</dbReference>
<dbReference type="GO" id="GO:0005829">
    <property type="term" value="C:cytosol"/>
    <property type="evidence" value="ECO:0007669"/>
    <property type="project" value="TreeGrafter"/>
</dbReference>
<dbReference type="GO" id="GO:0009349">
    <property type="term" value="C:riboflavin synthase complex"/>
    <property type="evidence" value="ECO:0007669"/>
    <property type="project" value="InterPro"/>
</dbReference>
<dbReference type="GO" id="GO:0000906">
    <property type="term" value="F:6,7-dimethyl-8-ribityllumazine synthase activity"/>
    <property type="evidence" value="ECO:0007669"/>
    <property type="project" value="UniProtKB-UniRule"/>
</dbReference>
<dbReference type="GO" id="GO:0009231">
    <property type="term" value="P:riboflavin biosynthetic process"/>
    <property type="evidence" value="ECO:0007669"/>
    <property type="project" value="UniProtKB-UniRule"/>
</dbReference>
<dbReference type="CDD" id="cd09209">
    <property type="entry name" value="Lumazine_synthase-I"/>
    <property type="match status" value="1"/>
</dbReference>
<dbReference type="Gene3D" id="3.40.50.960">
    <property type="entry name" value="Lumazine/riboflavin synthase"/>
    <property type="match status" value="1"/>
</dbReference>
<dbReference type="HAMAP" id="MF_00178">
    <property type="entry name" value="Lumazine_synth"/>
    <property type="match status" value="1"/>
</dbReference>
<dbReference type="InterPro" id="IPR034964">
    <property type="entry name" value="LS"/>
</dbReference>
<dbReference type="InterPro" id="IPR002180">
    <property type="entry name" value="LS/RS"/>
</dbReference>
<dbReference type="InterPro" id="IPR036467">
    <property type="entry name" value="LS/RS_sf"/>
</dbReference>
<dbReference type="NCBIfam" id="TIGR00114">
    <property type="entry name" value="lumazine-synth"/>
    <property type="match status" value="1"/>
</dbReference>
<dbReference type="PANTHER" id="PTHR21058:SF0">
    <property type="entry name" value="6,7-DIMETHYL-8-RIBITYLLUMAZINE SYNTHASE"/>
    <property type="match status" value="1"/>
</dbReference>
<dbReference type="PANTHER" id="PTHR21058">
    <property type="entry name" value="6,7-DIMETHYL-8-RIBITYLLUMAZINE SYNTHASE DMRL SYNTHASE LUMAZINE SYNTHASE"/>
    <property type="match status" value="1"/>
</dbReference>
<dbReference type="Pfam" id="PF00885">
    <property type="entry name" value="DMRL_synthase"/>
    <property type="match status" value="1"/>
</dbReference>
<dbReference type="SUPFAM" id="SSF52121">
    <property type="entry name" value="Lumazine synthase"/>
    <property type="match status" value="1"/>
</dbReference>
<keyword id="KW-0686">Riboflavin biosynthesis</keyword>
<keyword id="KW-0808">Transferase</keyword>
<accession>A2C5T7</accession>